<gene>
    <name type="primary">MT-ND2</name>
    <name type="synonym">MTND2</name>
    <name type="synonym">NADH2</name>
    <name type="synonym">ND2</name>
</gene>
<accession>P24972</accession>
<proteinExistence type="inferred from homology"/>
<geneLocation type="mitochondrion"/>
<protein>
    <recommendedName>
        <fullName>NADH-ubiquinone oxidoreductase chain 2</fullName>
        <ecNumber>7.1.1.2</ecNumber>
    </recommendedName>
    <alternativeName>
        <fullName>NADH dehydrogenase subunit 2</fullName>
    </alternativeName>
</protein>
<evidence type="ECO:0000250" key="1"/>
<evidence type="ECO:0000255" key="2"/>
<evidence type="ECO:0000305" key="3"/>
<comment type="function">
    <text evidence="1">Core subunit of the mitochondrial membrane respiratory chain NADH dehydrogenase (Complex I) that is believed to belong to the minimal assembly required for catalysis. Complex I functions in the transfer of electrons from NADH to the respiratory chain. The immediate electron acceptor for the enzyme is believed to be ubiquinone (By similarity).</text>
</comment>
<comment type="catalytic activity">
    <reaction>
        <text>a ubiquinone + NADH + 5 H(+)(in) = a ubiquinol + NAD(+) + 4 H(+)(out)</text>
        <dbReference type="Rhea" id="RHEA:29091"/>
        <dbReference type="Rhea" id="RHEA-COMP:9565"/>
        <dbReference type="Rhea" id="RHEA-COMP:9566"/>
        <dbReference type="ChEBI" id="CHEBI:15378"/>
        <dbReference type="ChEBI" id="CHEBI:16389"/>
        <dbReference type="ChEBI" id="CHEBI:17976"/>
        <dbReference type="ChEBI" id="CHEBI:57540"/>
        <dbReference type="ChEBI" id="CHEBI:57945"/>
        <dbReference type="EC" id="7.1.1.2"/>
    </reaction>
</comment>
<comment type="subcellular location">
    <subcellularLocation>
        <location>Mitochondrion inner membrane</location>
        <topology>Multi-pass membrane protein</topology>
    </subcellularLocation>
</comment>
<comment type="similarity">
    <text evidence="3">Belongs to the complex I subunit 2 family.</text>
</comment>
<feature type="chain" id="PRO_0000117576" description="NADH-ubiquinone oxidoreductase chain 2">
    <location>
        <begin position="1"/>
        <end position="348"/>
    </location>
</feature>
<feature type="transmembrane region" description="Helical" evidence="2">
    <location>
        <begin position="13"/>
        <end position="33"/>
    </location>
</feature>
<feature type="transmembrane region" description="Helical" evidence="2">
    <location>
        <begin position="60"/>
        <end position="80"/>
    </location>
</feature>
<feature type="transmembrane region" description="Helical" evidence="2">
    <location>
        <begin position="93"/>
        <end position="113"/>
    </location>
</feature>
<feature type="transmembrane region" description="Helical" evidence="2">
    <location>
        <begin position="149"/>
        <end position="169"/>
    </location>
</feature>
<feature type="transmembrane region" description="Helical" evidence="2">
    <location>
        <begin position="178"/>
        <end position="197"/>
    </location>
</feature>
<feature type="transmembrane region" description="Helical" evidence="2">
    <location>
        <begin position="202"/>
        <end position="219"/>
    </location>
</feature>
<feature type="transmembrane region" description="Helical" evidence="2">
    <location>
        <begin position="246"/>
        <end position="266"/>
    </location>
</feature>
<feature type="transmembrane region" description="Helical" evidence="2">
    <location>
        <begin position="274"/>
        <end position="294"/>
    </location>
</feature>
<feature type="transmembrane region" description="Helical" evidence="2">
    <location>
        <begin position="326"/>
        <end position="346"/>
    </location>
</feature>
<reference key="1">
    <citation type="journal article" date="1994" name="J. Mol. Evol.">
        <title>The complete nucleotide sequence and gene organization of carp (Cyprinus carpio) mitochondrial genome.</title>
        <authorList>
            <person name="Chang Y.S."/>
            <person name="Huang F.L."/>
            <person name="Lo T.B."/>
        </authorList>
    </citation>
    <scope>NUCLEOTIDE SEQUENCE [GENOMIC DNA]</scope>
</reference>
<organism>
    <name type="scientific">Cyprinus carpio</name>
    <name type="common">Common carp</name>
    <dbReference type="NCBI Taxonomy" id="7962"/>
    <lineage>
        <taxon>Eukaryota</taxon>
        <taxon>Metazoa</taxon>
        <taxon>Chordata</taxon>
        <taxon>Craniata</taxon>
        <taxon>Vertebrata</taxon>
        <taxon>Euteleostomi</taxon>
        <taxon>Actinopterygii</taxon>
        <taxon>Neopterygii</taxon>
        <taxon>Teleostei</taxon>
        <taxon>Ostariophysi</taxon>
        <taxon>Cypriniformes</taxon>
        <taxon>Cyprinidae</taxon>
        <taxon>Cyprininae</taxon>
        <taxon>Cyprinus</taxon>
    </lineage>
</organism>
<keyword id="KW-0249">Electron transport</keyword>
<keyword id="KW-0472">Membrane</keyword>
<keyword id="KW-0496">Mitochondrion</keyword>
<keyword id="KW-0999">Mitochondrion inner membrane</keyword>
<keyword id="KW-0520">NAD</keyword>
<keyword id="KW-1185">Reference proteome</keyword>
<keyword id="KW-0679">Respiratory chain</keyword>
<keyword id="KW-1278">Translocase</keyword>
<keyword id="KW-0812">Transmembrane</keyword>
<keyword id="KW-1133">Transmembrane helix</keyword>
<keyword id="KW-0813">Transport</keyword>
<keyword id="KW-0830">Ubiquinone</keyword>
<sequence length="348" mass="37851">MNPYRRATLLCSVGLGTTLTFASSHWLLAWMGLEINTLAITPLMAQHHHPRAVEATTKYFLTQATAAAMILFASTTNAWMTGEWSINDLSNPIASTMFMAALALKIGLAPMHFWMPEVLQGLDLLTGLILSTWQKLAPLALIIQTAQTIDPLLLTLLGISSTLVGGWGGLNQTQLRKILAYSSIAHMGWMIIVIQYAPQLTLIALGTYIIMTSAAFLTLKMSLTTKISTLATTWSKSPILTSTTALVLLSLGGLPPLTGFMPKWLILQELTKQDLPIIATAMALTALISLYFYLRLLYAMTLTISPNMINSTTPWRTQTTQTSLPLALFTTAALGLLPMAPAILMLTT</sequence>
<name>NU2M_CYPCA</name>
<dbReference type="EC" id="7.1.1.2"/>
<dbReference type="EMBL" id="X61010">
    <property type="protein sequence ID" value="CAA43333.1"/>
    <property type="molecule type" value="Genomic_DNA"/>
</dbReference>
<dbReference type="PIR" id="S36003">
    <property type="entry name" value="S36003"/>
</dbReference>
<dbReference type="RefSeq" id="NP_007083.1">
    <property type="nucleotide sequence ID" value="NC_001606.1"/>
</dbReference>
<dbReference type="SMR" id="P24972"/>
<dbReference type="GeneID" id="807766"/>
<dbReference type="KEGG" id="ccar:807766"/>
<dbReference type="CTD" id="4536"/>
<dbReference type="OMA" id="HFWVPEV"/>
<dbReference type="OrthoDB" id="4092844at2759"/>
<dbReference type="Proteomes" id="UP000694384">
    <property type="component" value="Unplaced"/>
</dbReference>
<dbReference type="Proteomes" id="UP000694427">
    <property type="component" value="Unplaced"/>
</dbReference>
<dbReference type="Proteomes" id="UP000694700">
    <property type="component" value="Unplaced"/>
</dbReference>
<dbReference type="Proteomes" id="UP000694701">
    <property type="component" value="Unplaced"/>
</dbReference>
<dbReference type="Proteomes" id="UP001155660">
    <property type="component" value="Mitochondrion MT"/>
</dbReference>
<dbReference type="GO" id="GO:0005743">
    <property type="term" value="C:mitochondrial inner membrane"/>
    <property type="evidence" value="ECO:0007669"/>
    <property type="project" value="UniProtKB-SubCell"/>
</dbReference>
<dbReference type="GO" id="GO:0008137">
    <property type="term" value="F:NADH dehydrogenase (ubiquinone) activity"/>
    <property type="evidence" value="ECO:0007669"/>
    <property type="project" value="UniProtKB-EC"/>
</dbReference>
<dbReference type="GO" id="GO:0006120">
    <property type="term" value="P:mitochondrial electron transport, NADH to ubiquinone"/>
    <property type="evidence" value="ECO:0007669"/>
    <property type="project" value="InterPro"/>
</dbReference>
<dbReference type="InterPro" id="IPR050175">
    <property type="entry name" value="Complex_I_Subunit_2"/>
</dbReference>
<dbReference type="InterPro" id="IPR010933">
    <property type="entry name" value="NADH_DH_su2_C"/>
</dbReference>
<dbReference type="InterPro" id="IPR003917">
    <property type="entry name" value="NADH_UbQ_OxRdtase_chain2"/>
</dbReference>
<dbReference type="InterPro" id="IPR001750">
    <property type="entry name" value="ND/Mrp_TM"/>
</dbReference>
<dbReference type="PANTHER" id="PTHR46552">
    <property type="entry name" value="NADH-UBIQUINONE OXIDOREDUCTASE CHAIN 2"/>
    <property type="match status" value="1"/>
</dbReference>
<dbReference type="PANTHER" id="PTHR46552:SF1">
    <property type="entry name" value="NADH-UBIQUINONE OXIDOREDUCTASE CHAIN 2"/>
    <property type="match status" value="1"/>
</dbReference>
<dbReference type="Pfam" id="PF06444">
    <property type="entry name" value="NADH_dehy_S2_C"/>
    <property type="match status" value="1"/>
</dbReference>
<dbReference type="Pfam" id="PF00361">
    <property type="entry name" value="Proton_antipo_M"/>
    <property type="match status" value="1"/>
</dbReference>
<dbReference type="PRINTS" id="PR01436">
    <property type="entry name" value="NADHDHGNASE2"/>
</dbReference>